<keyword id="KW-0963">Cytoplasm</keyword>
<keyword id="KW-0274">FAD</keyword>
<keyword id="KW-0285">Flavoprotein</keyword>
<keyword id="KW-0520">NAD</keyword>
<keyword id="KW-1185">Reference proteome</keyword>
<keyword id="KW-0819">tRNA processing</keyword>
<proteinExistence type="inferred from homology"/>
<sequence length="624" mass="70102">MIYKAGSYEVIVIGAGHAGCEAALASARMGCQTLLVTMSIDHIALMPCNPSIGGPAKAQVVREIDALGGEMALNIDKANVQIRTINTGKGPAVQALRAQADKRQYHLEMLKTLFNQKKLDILMAEVEDIELSAGRVKAIVTRTGARFECQALVLTTGTYLKGRIIVGDISFDGGPGNQFPAARLSESLKRMGLRLGRFKTGTPPRIDSKSVDFSKMIEQPGDKRPLRFSFISPLINRPQLPCWLTHSNKKTHQIVMNNLDRAPMYTGIIKGIGTRYCPSFEDKVVRFSHKDSHQLFIEPEGRDTDEMYVQGLNTSLPEDVQIEVLKSIPGLENVRIMRTGYAIEYDIIYPSQLKLSLECKTVEGLFTAGQINGTSGYEEAAAQGLIAGINAALQVKEKEPFILKRSEAYIAVMIDDLINKEIVEPYRLLTSRAEYRLLLRQDNADLRLTEKGRQIGLVDDNRWMAYQQKEEILEVESNELKFSSFTPADEEMADFLSGKNTAAIRDRVSLWELLRRPELSIYDYVEKGWLRDNDPDILEQLEIQAKYEGYIEKQKEQVKRFEKLENKMIPPDINYDEVYGLSQEAVQKLKIILPASVGQASRIAGVNPADINVLLIFLEKKRRK</sequence>
<gene>
    <name evidence="1" type="primary">mnmG</name>
    <name evidence="1" type="synonym">gidA</name>
    <name type="ordered locus">Swol_2571</name>
</gene>
<dbReference type="EMBL" id="CP000448">
    <property type="protein sequence ID" value="ABI69858.1"/>
    <property type="molecule type" value="Genomic_DNA"/>
</dbReference>
<dbReference type="RefSeq" id="WP_011641938.1">
    <property type="nucleotide sequence ID" value="NC_008346.1"/>
</dbReference>
<dbReference type="SMR" id="Q0ATU6"/>
<dbReference type="STRING" id="335541.Swol_2571"/>
<dbReference type="KEGG" id="swo:Swol_2571"/>
<dbReference type="eggNOG" id="COG0445">
    <property type="taxonomic scope" value="Bacteria"/>
</dbReference>
<dbReference type="HOGENOM" id="CLU_007831_2_2_9"/>
<dbReference type="OrthoDB" id="9815560at2"/>
<dbReference type="Proteomes" id="UP000001968">
    <property type="component" value="Chromosome"/>
</dbReference>
<dbReference type="GO" id="GO:0005829">
    <property type="term" value="C:cytosol"/>
    <property type="evidence" value="ECO:0007669"/>
    <property type="project" value="TreeGrafter"/>
</dbReference>
<dbReference type="GO" id="GO:0050660">
    <property type="term" value="F:flavin adenine dinucleotide binding"/>
    <property type="evidence" value="ECO:0007669"/>
    <property type="project" value="UniProtKB-UniRule"/>
</dbReference>
<dbReference type="GO" id="GO:0030488">
    <property type="term" value="P:tRNA methylation"/>
    <property type="evidence" value="ECO:0007669"/>
    <property type="project" value="TreeGrafter"/>
</dbReference>
<dbReference type="GO" id="GO:0002098">
    <property type="term" value="P:tRNA wobble uridine modification"/>
    <property type="evidence" value="ECO:0007669"/>
    <property type="project" value="InterPro"/>
</dbReference>
<dbReference type="FunFam" id="1.10.150.570:FF:000001">
    <property type="entry name" value="tRNA uridine 5-carboxymethylaminomethyl modification enzyme MnmG"/>
    <property type="match status" value="1"/>
</dbReference>
<dbReference type="FunFam" id="3.50.50.60:FF:000002">
    <property type="entry name" value="tRNA uridine 5-carboxymethylaminomethyl modification enzyme MnmG"/>
    <property type="match status" value="1"/>
</dbReference>
<dbReference type="Gene3D" id="3.50.50.60">
    <property type="entry name" value="FAD/NAD(P)-binding domain"/>
    <property type="match status" value="2"/>
</dbReference>
<dbReference type="Gene3D" id="1.10.150.570">
    <property type="entry name" value="GidA associated domain, C-terminal subdomain"/>
    <property type="match status" value="1"/>
</dbReference>
<dbReference type="Gene3D" id="1.10.10.1800">
    <property type="entry name" value="tRNA uridine 5-carboxymethylaminomethyl modification enzyme MnmG/GidA"/>
    <property type="match status" value="1"/>
</dbReference>
<dbReference type="HAMAP" id="MF_00129">
    <property type="entry name" value="MnmG_GidA"/>
    <property type="match status" value="1"/>
</dbReference>
<dbReference type="InterPro" id="IPR036188">
    <property type="entry name" value="FAD/NAD-bd_sf"/>
</dbReference>
<dbReference type="InterPro" id="IPR049312">
    <property type="entry name" value="GIDA_C_N"/>
</dbReference>
<dbReference type="InterPro" id="IPR004416">
    <property type="entry name" value="MnmG"/>
</dbReference>
<dbReference type="InterPro" id="IPR002218">
    <property type="entry name" value="MnmG-rel"/>
</dbReference>
<dbReference type="InterPro" id="IPR020595">
    <property type="entry name" value="MnmG-rel_CS"/>
</dbReference>
<dbReference type="InterPro" id="IPR026904">
    <property type="entry name" value="MnmG_C"/>
</dbReference>
<dbReference type="InterPro" id="IPR047001">
    <property type="entry name" value="MnmG_C_subdom"/>
</dbReference>
<dbReference type="InterPro" id="IPR044920">
    <property type="entry name" value="MnmG_C_subdom_sf"/>
</dbReference>
<dbReference type="InterPro" id="IPR040131">
    <property type="entry name" value="MnmG_N"/>
</dbReference>
<dbReference type="NCBIfam" id="TIGR00136">
    <property type="entry name" value="mnmG_gidA"/>
    <property type="match status" value="1"/>
</dbReference>
<dbReference type="PANTHER" id="PTHR11806">
    <property type="entry name" value="GLUCOSE INHIBITED DIVISION PROTEIN A"/>
    <property type="match status" value="1"/>
</dbReference>
<dbReference type="PANTHER" id="PTHR11806:SF0">
    <property type="entry name" value="PROTEIN MTO1 HOMOLOG, MITOCHONDRIAL"/>
    <property type="match status" value="1"/>
</dbReference>
<dbReference type="Pfam" id="PF01134">
    <property type="entry name" value="GIDA"/>
    <property type="match status" value="1"/>
</dbReference>
<dbReference type="Pfam" id="PF21680">
    <property type="entry name" value="GIDA_C_1st"/>
    <property type="match status" value="1"/>
</dbReference>
<dbReference type="Pfam" id="PF13932">
    <property type="entry name" value="SAM_GIDA_C"/>
    <property type="match status" value="1"/>
</dbReference>
<dbReference type="SMART" id="SM01228">
    <property type="entry name" value="GIDA_assoc_3"/>
    <property type="match status" value="1"/>
</dbReference>
<dbReference type="SUPFAM" id="SSF51905">
    <property type="entry name" value="FAD/NAD(P)-binding domain"/>
    <property type="match status" value="1"/>
</dbReference>
<dbReference type="PROSITE" id="PS01280">
    <property type="entry name" value="GIDA_1"/>
    <property type="match status" value="1"/>
</dbReference>
<dbReference type="PROSITE" id="PS01281">
    <property type="entry name" value="GIDA_2"/>
    <property type="match status" value="1"/>
</dbReference>
<reference key="1">
    <citation type="journal article" date="2010" name="Environ. Microbiol.">
        <title>The genome of Syntrophomonas wolfei: new insights into syntrophic metabolism and biohydrogen production.</title>
        <authorList>
            <person name="Sieber J.R."/>
            <person name="Sims D.R."/>
            <person name="Han C."/>
            <person name="Kim E."/>
            <person name="Lykidis A."/>
            <person name="Lapidus A.L."/>
            <person name="McDonnald E."/>
            <person name="Rohlin L."/>
            <person name="Culley D.E."/>
            <person name="Gunsalus R."/>
            <person name="McInerney M.J."/>
        </authorList>
    </citation>
    <scope>NUCLEOTIDE SEQUENCE [LARGE SCALE GENOMIC DNA]</scope>
    <source>
        <strain>DSM 2245B / Goettingen</strain>
    </source>
</reference>
<name>MNMG_SYNWW</name>
<evidence type="ECO:0000255" key="1">
    <source>
        <dbReference type="HAMAP-Rule" id="MF_00129"/>
    </source>
</evidence>
<accession>Q0ATU6</accession>
<feature type="chain" id="PRO_1000071418" description="tRNA uridine 5-carboxymethylaminomethyl modification enzyme MnmG">
    <location>
        <begin position="1"/>
        <end position="624"/>
    </location>
</feature>
<feature type="binding site" evidence="1">
    <location>
        <begin position="14"/>
        <end position="19"/>
    </location>
    <ligand>
        <name>FAD</name>
        <dbReference type="ChEBI" id="CHEBI:57692"/>
    </ligand>
</feature>
<feature type="binding site" evidence="1">
    <location>
        <begin position="273"/>
        <end position="287"/>
    </location>
    <ligand>
        <name>NAD(+)</name>
        <dbReference type="ChEBI" id="CHEBI:57540"/>
    </ligand>
</feature>
<organism>
    <name type="scientific">Syntrophomonas wolfei subsp. wolfei (strain DSM 2245B / Goettingen)</name>
    <dbReference type="NCBI Taxonomy" id="335541"/>
    <lineage>
        <taxon>Bacteria</taxon>
        <taxon>Bacillati</taxon>
        <taxon>Bacillota</taxon>
        <taxon>Clostridia</taxon>
        <taxon>Eubacteriales</taxon>
        <taxon>Syntrophomonadaceae</taxon>
        <taxon>Syntrophomonas</taxon>
    </lineage>
</organism>
<comment type="function">
    <text evidence="1">NAD-binding protein involved in the addition of a carboxymethylaminomethyl (cmnm) group at the wobble position (U34) of certain tRNAs, forming tRNA-cmnm(5)s(2)U34.</text>
</comment>
<comment type="cofactor">
    <cofactor evidence="1">
        <name>FAD</name>
        <dbReference type="ChEBI" id="CHEBI:57692"/>
    </cofactor>
</comment>
<comment type="subunit">
    <text evidence="1">Homodimer. Heterotetramer of two MnmE and two MnmG subunits.</text>
</comment>
<comment type="subcellular location">
    <subcellularLocation>
        <location evidence="1">Cytoplasm</location>
    </subcellularLocation>
</comment>
<comment type="similarity">
    <text evidence="1">Belongs to the MnmG family.</text>
</comment>
<protein>
    <recommendedName>
        <fullName evidence="1">tRNA uridine 5-carboxymethylaminomethyl modification enzyme MnmG</fullName>
    </recommendedName>
    <alternativeName>
        <fullName evidence="1">Glucose-inhibited division protein A</fullName>
    </alternativeName>
</protein>